<proteinExistence type="inferred from homology"/>
<gene>
    <name evidence="1" type="primary">ureD</name>
    <name type="ordered locus">Noc_2883</name>
</gene>
<dbReference type="EMBL" id="CP000127">
    <property type="protein sequence ID" value="ABA59329.1"/>
    <property type="molecule type" value="Genomic_DNA"/>
</dbReference>
<dbReference type="RefSeq" id="WP_002813294.1">
    <property type="nucleotide sequence ID" value="NC_007484.1"/>
</dbReference>
<dbReference type="SMR" id="Q3J767"/>
<dbReference type="STRING" id="323261.Noc_2883"/>
<dbReference type="KEGG" id="noc:Noc_2883"/>
<dbReference type="eggNOG" id="COG0829">
    <property type="taxonomic scope" value="Bacteria"/>
</dbReference>
<dbReference type="HOGENOM" id="CLU_056339_0_0_6"/>
<dbReference type="InParanoid" id="Q3J767"/>
<dbReference type="Proteomes" id="UP000006838">
    <property type="component" value="Chromosome"/>
</dbReference>
<dbReference type="GO" id="GO:0005737">
    <property type="term" value="C:cytoplasm"/>
    <property type="evidence" value="ECO:0007669"/>
    <property type="project" value="UniProtKB-SubCell"/>
</dbReference>
<dbReference type="GO" id="GO:0016151">
    <property type="term" value="F:nickel cation binding"/>
    <property type="evidence" value="ECO:0007669"/>
    <property type="project" value="UniProtKB-UniRule"/>
</dbReference>
<dbReference type="HAMAP" id="MF_01384">
    <property type="entry name" value="UreD"/>
    <property type="match status" value="1"/>
</dbReference>
<dbReference type="InterPro" id="IPR002669">
    <property type="entry name" value="UreD"/>
</dbReference>
<dbReference type="PANTHER" id="PTHR33643">
    <property type="entry name" value="UREASE ACCESSORY PROTEIN D"/>
    <property type="match status" value="1"/>
</dbReference>
<dbReference type="PANTHER" id="PTHR33643:SF1">
    <property type="entry name" value="UREASE ACCESSORY PROTEIN D"/>
    <property type="match status" value="1"/>
</dbReference>
<dbReference type="Pfam" id="PF01774">
    <property type="entry name" value="UreD"/>
    <property type="match status" value="1"/>
</dbReference>
<comment type="function">
    <text evidence="1">Required for maturation of urease via the functional incorporation of the urease nickel metallocenter.</text>
</comment>
<comment type="subunit">
    <text evidence="1">UreD, UreF and UreG form a complex that acts as a GTP-hydrolysis-dependent molecular chaperone, activating the urease apoprotein by helping to assemble the nickel containing metallocenter of UreC. The UreE protein probably delivers the nickel.</text>
</comment>
<comment type="subcellular location">
    <subcellularLocation>
        <location evidence="1">Cytoplasm</location>
    </subcellularLocation>
</comment>
<comment type="similarity">
    <text evidence="1">Belongs to the UreD family.</text>
</comment>
<name>URED_NITOC</name>
<keyword id="KW-0143">Chaperone</keyword>
<keyword id="KW-0963">Cytoplasm</keyword>
<keyword id="KW-0996">Nickel insertion</keyword>
<keyword id="KW-1185">Reference proteome</keyword>
<accession>Q3J767</accession>
<sequence>MKKIAVFKQMPCEAADAPPAKTDLLPLSWPAKLELGYQRVKMRTVPVLRRHQGPLRVQKHLYPEGPAVCQHMILHPPGGIAGGDTLDIQIHAGSHAWAQLTSPGAAKWYRSEVSLARQNLALSTEPGGILEWLPQETIFFAGCQTALDTTIDLAEDAKVIAWDIIALGRPASGERFNSGRIYQRFRLRRNGRLLWSERMQLLGGSRLLESPIGFAGYPVAGTLLASGELNDQQLTACRSLPIEGGRGGLSQLPGLVVARFLGEETEAARNWFIALWQELRPALLGRSVSIPRIWNT</sequence>
<organism>
    <name type="scientific">Nitrosococcus oceani (strain ATCC 19707 / BCRC 17464 / JCM 30415 / NCIMB 11848 / C-107)</name>
    <dbReference type="NCBI Taxonomy" id="323261"/>
    <lineage>
        <taxon>Bacteria</taxon>
        <taxon>Pseudomonadati</taxon>
        <taxon>Pseudomonadota</taxon>
        <taxon>Gammaproteobacteria</taxon>
        <taxon>Chromatiales</taxon>
        <taxon>Chromatiaceae</taxon>
        <taxon>Nitrosococcus</taxon>
    </lineage>
</organism>
<evidence type="ECO:0000255" key="1">
    <source>
        <dbReference type="HAMAP-Rule" id="MF_01384"/>
    </source>
</evidence>
<feature type="chain" id="PRO_0000340466" description="Urease accessory protein UreD">
    <location>
        <begin position="1"/>
        <end position="296"/>
    </location>
</feature>
<reference key="1">
    <citation type="journal article" date="2006" name="Appl. Environ. Microbiol.">
        <title>Complete genome sequence of the marine, chemolithoautotrophic, ammonia-oxidizing bacterium Nitrosococcus oceani ATCC 19707.</title>
        <authorList>
            <person name="Klotz M.G."/>
            <person name="Arp D.J."/>
            <person name="Chain P.S.G."/>
            <person name="El-Sheikh A.F."/>
            <person name="Hauser L.J."/>
            <person name="Hommes N.G."/>
            <person name="Larimer F.W."/>
            <person name="Malfatti S.A."/>
            <person name="Norton J.M."/>
            <person name="Poret-Peterson A.T."/>
            <person name="Vergez L.M."/>
            <person name="Ward B.B."/>
        </authorList>
    </citation>
    <scope>NUCLEOTIDE SEQUENCE [LARGE SCALE GENOMIC DNA]</scope>
    <source>
        <strain>ATCC 19707 / BCRC 17464 / JCM 30415 / NCIMB 11848 / C-107</strain>
    </source>
</reference>
<protein>
    <recommendedName>
        <fullName evidence="1">Urease accessory protein UreD</fullName>
    </recommendedName>
</protein>